<feature type="chain" id="PRO_1000008444" description="Holo-[acyl-carrier-protein] synthase">
    <location>
        <begin position="1"/>
        <end position="124"/>
    </location>
</feature>
<feature type="binding site" evidence="1">
    <location>
        <position position="8"/>
    </location>
    <ligand>
        <name>Mg(2+)</name>
        <dbReference type="ChEBI" id="CHEBI:18420"/>
    </ligand>
</feature>
<feature type="binding site" evidence="1">
    <location>
        <position position="57"/>
    </location>
    <ligand>
        <name>Mg(2+)</name>
        <dbReference type="ChEBI" id="CHEBI:18420"/>
    </ligand>
</feature>
<protein>
    <recommendedName>
        <fullName evidence="1">Holo-[acyl-carrier-protein] synthase</fullName>
        <shortName evidence="1">Holo-ACP synthase</shortName>
        <ecNumber evidence="1">2.7.8.7</ecNumber>
    </recommendedName>
    <alternativeName>
        <fullName evidence="1">4'-phosphopantetheinyl transferase AcpS</fullName>
    </alternativeName>
</protein>
<reference key="1">
    <citation type="journal article" date="2006" name="Proc. Natl. Acad. Sci. U.S.A.">
        <title>Genome reduction in Leptospira borgpetersenii reflects limited transmission potential.</title>
        <authorList>
            <person name="Bulach D.M."/>
            <person name="Zuerner R.L."/>
            <person name="Wilson P."/>
            <person name="Seemann T."/>
            <person name="McGrath A."/>
            <person name="Cullen P.A."/>
            <person name="Davis J."/>
            <person name="Johnson M."/>
            <person name="Kuczek E."/>
            <person name="Alt D.P."/>
            <person name="Peterson-Burch B."/>
            <person name="Coppel R.L."/>
            <person name="Rood J.I."/>
            <person name="Davies J.K."/>
            <person name="Adler B."/>
        </authorList>
    </citation>
    <scope>NUCLEOTIDE SEQUENCE [LARGE SCALE GENOMIC DNA]</scope>
    <source>
        <strain>L550</strain>
    </source>
</reference>
<accession>Q053N9</accession>
<keyword id="KW-0963">Cytoplasm</keyword>
<keyword id="KW-0275">Fatty acid biosynthesis</keyword>
<keyword id="KW-0276">Fatty acid metabolism</keyword>
<keyword id="KW-0444">Lipid biosynthesis</keyword>
<keyword id="KW-0443">Lipid metabolism</keyword>
<keyword id="KW-0460">Magnesium</keyword>
<keyword id="KW-0479">Metal-binding</keyword>
<keyword id="KW-0808">Transferase</keyword>
<evidence type="ECO:0000255" key="1">
    <source>
        <dbReference type="HAMAP-Rule" id="MF_00101"/>
    </source>
</evidence>
<comment type="function">
    <text evidence="1">Transfers the 4'-phosphopantetheine moiety from coenzyme A to a Ser of acyl-carrier-protein.</text>
</comment>
<comment type="catalytic activity">
    <reaction evidence="1">
        <text>apo-[ACP] + CoA = holo-[ACP] + adenosine 3',5'-bisphosphate + H(+)</text>
        <dbReference type="Rhea" id="RHEA:12068"/>
        <dbReference type="Rhea" id="RHEA-COMP:9685"/>
        <dbReference type="Rhea" id="RHEA-COMP:9690"/>
        <dbReference type="ChEBI" id="CHEBI:15378"/>
        <dbReference type="ChEBI" id="CHEBI:29999"/>
        <dbReference type="ChEBI" id="CHEBI:57287"/>
        <dbReference type="ChEBI" id="CHEBI:58343"/>
        <dbReference type="ChEBI" id="CHEBI:64479"/>
        <dbReference type="EC" id="2.7.8.7"/>
    </reaction>
</comment>
<comment type="cofactor">
    <cofactor evidence="1">
        <name>Mg(2+)</name>
        <dbReference type="ChEBI" id="CHEBI:18420"/>
    </cofactor>
</comment>
<comment type="subcellular location">
    <subcellularLocation>
        <location evidence="1">Cytoplasm</location>
    </subcellularLocation>
</comment>
<comment type="similarity">
    <text evidence="1">Belongs to the P-Pant transferase superfamily. AcpS family.</text>
</comment>
<sequence>MKISVGNDIVENARIRDLLEKHGDRFLKRIFSESEREYCSNRKDPVPHLSGRFCVKEAFIKAIEPKVVLDMREIELFGKEFGKKELVLHGKSKELFLTKGYNGCSVSISHAENYSTAVVVLYKE</sequence>
<proteinExistence type="inferred from homology"/>
<organism>
    <name type="scientific">Leptospira borgpetersenii serovar Hardjo-bovis (strain L550)</name>
    <dbReference type="NCBI Taxonomy" id="355276"/>
    <lineage>
        <taxon>Bacteria</taxon>
        <taxon>Pseudomonadati</taxon>
        <taxon>Spirochaetota</taxon>
        <taxon>Spirochaetia</taxon>
        <taxon>Leptospirales</taxon>
        <taxon>Leptospiraceae</taxon>
        <taxon>Leptospira</taxon>
    </lineage>
</organism>
<gene>
    <name evidence="1" type="primary">acpS</name>
    <name type="ordered locus">LBL_0915</name>
</gene>
<dbReference type="EC" id="2.7.8.7" evidence="1"/>
<dbReference type="EMBL" id="CP000348">
    <property type="protein sequence ID" value="ABJ78456.1"/>
    <property type="molecule type" value="Genomic_DNA"/>
</dbReference>
<dbReference type="RefSeq" id="WP_011669747.1">
    <property type="nucleotide sequence ID" value="NC_008508.1"/>
</dbReference>
<dbReference type="SMR" id="Q053N9"/>
<dbReference type="KEGG" id="lbl:LBL_0915"/>
<dbReference type="HOGENOM" id="CLU_089696_2_1_12"/>
<dbReference type="GO" id="GO:0005737">
    <property type="term" value="C:cytoplasm"/>
    <property type="evidence" value="ECO:0007669"/>
    <property type="project" value="UniProtKB-SubCell"/>
</dbReference>
<dbReference type="GO" id="GO:0008897">
    <property type="term" value="F:holo-[acyl-carrier-protein] synthase activity"/>
    <property type="evidence" value="ECO:0007669"/>
    <property type="project" value="UniProtKB-UniRule"/>
</dbReference>
<dbReference type="GO" id="GO:0000287">
    <property type="term" value="F:magnesium ion binding"/>
    <property type="evidence" value="ECO:0007669"/>
    <property type="project" value="UniProtKB-UniRule"/>
</dbReference>
<dbReference type="GO" id="GO:0006633">
    <property type="term" value="P:fatty acid biosynthetic process"/>
    <property type="evidence" value="ECO:0007669"/>
    <property type="project" value="UniProtKB-UniRule"/>
</dbReference>
<dbReference type="Gene3D" id="3.90.470.20">
    <property type="entry name" value="4'-phosphopantetheinyl transferase domain"/>
    <property type="match status" value="1"/>
</dbReference>
<dbReference type="HAMAP" id="MF_00101">
    <property type="entry name" value="AcpS"/>
    <property type="match status" value="1"/>
</dbReference>
<dbReference type="InterPro" id="IPR008278">
    <property type="entry name" value="4-PPantetheinyl_Trfase_dom"/>
</dbReference>
<dbReference type="InterPro" id="IPR037143">
    <property type="entry name" value="4-PPantetheinyl_Trfase_dom_sf"/>
</dbReference>
<dbReference type="InterPro" id="IPR002582">
    <property type="entry name" value="ACPS"/>
</dbReference>
<dbReference type="InterPro" id="IPR004568">
    <property type="entry name" value="Ppantetheine-prot_Trfase_dom"/>
</dbReference>
<dbReference type="NCBIfam" id="TIGR00516">
    <property type="entry name" value="acpS"/>
    <property type="match status" value="1"/>
</dbReference>
<dbReference type="NCBIfam" id="TIGR00556">
    <property type="entry name" value="pantethn_trn"/>
    <property type="match status" value="1"/>
</dbReference>
<dbReference type="Pfam" id="PF01648">
    <property type="entry name" value="ACPS"/>
    <property type="match status" value="1"/>
</dbReference>
<dbReference type="SUPFAM" id="SSF56214">
    <property type="entry name" value="4'-phosphopantetheinyl transferase"/>
    <property type="match status" value="1"/>
</dbReference>
<name>ACPS_LEPBL</name>